<name>ZNTB_SALEP</name>
<gene>
    <name evidence="1" type="primary">zntB</name>
    <name type="ordered locus">SEN1375</name>
</gene>
<evidence type="ECO:0000255" key="1">
    <source>
        <dbReference type="HAMAP-Rule" id="MF_01565"/>
    </source>
</evidence>
<dbReference type="EMBL" id="AM933172">
    <property type="protein sequence ID" value="CAR32954.1"/>
    <property type="molecule type" value="Genomic_DNA"/>
</dbReference>
<dbReference type="RefSeq" id="WP_000387374.1">
    <property type="nucleotide sequence ID" value="NC_011294.1"/>
</dbReference>
<dbReference type="SMR" id="B5R4D6"/>
<dbReference type="KEGG" id="set:SEN1375"/>
<dbReference type="HOGENOM" id="CLU_007127_2_0_6"/>
<dbReference type="Proteomes" id="UP000000613">
    <property type="component" value="Chromosome"/>
</dbReference>
<dbReference type="GO" id="GO:0005886">
    <property type="term" value="C:plasma membrane"/>
    <property type="evidence" value="ECO:0007669"/>
    <property type="project" value="UniProtKB-SubCell"/>
</dbReference>
<dbReference type="GO" id="GO:0050897">
    <property type="term" value="F:cobalt ion binding"/>
    <property type="evidence" value="ECO:0007669"/>
    <property type="project" value="TreeGrafter"/>
</dbReference>
<dbReference type="GO" id="GO:0015087">
    <property type="term" value="F:cobalt ion transmembrane transporter activity"/>
    <property type="evidence" value="ECO:0007669"/>
    <property type="project" value="TreeGrafter"/>
</dbReference>
<dbReference type="GO" id="GO:0000287">
    <property type="term" value="F:magnesium ion binding"/>
    <property type="evidence" value="ECO:0007669"/>
    <property type="project" value="TreeGrafter"/>
</dbReference>
<dbReference type="GO" id="GO:0015095">
    <property type="term" value="F:magnesium ion transmembrane transporter activity"/>
    <property type="evidence" value="ECO:0007669"/>
    <property type="project" value="TreeGrafter"/>
</dbReference>
<dbReference type="GO" id="GO:0005385">
    <property type="term" value="F:zinc ion transmembrane transporter activity"/>
    <property type="evidence" value="ECO:0007669"/>
    <property type="project" value="UniProtKB-UniRule"/>
</dbReference>
<dbReference type="CDD" id="cd12833">
    <property type="entry name" value="ZntB-like_1"/>
    <property type="match status" value="1"/>
</dbReference>
<dbReference type="FunFam" id="1.20.58.340:FF:000002">
    <property type="entry name" value="Zinc transport protein ZntB"/>
    <property type="match status" value="1"/>
</dbReference>
<dbReference type="FunFam" id="3.30.460.20:FF:000001">
    <property type="entry name" value="Zinc transport protein ZntB"/>
    <property type="match status" value="1"/>
</dbReference>
<dbReference type="Gene3D" id="3.30.460.20">
    <property type="entry name" value="CorA soluble domain-like"/>
    <property type="match status" value="1"/>
</dbReference>
<dbReference type="Gene3D" id="1.20.58.340">
    <property type="entry name" value="Magnesium transport protein CorA, transmembrane region"/>
    <property type="match status" value="2"/>
</dbReference>
<dbReference type="HAMAP" id="MF_01565">
    <property type="entry name" value="ZntB"/>
    <property type="match status" value="1"/>
</dbReference>
<dbReference type="InterPro" id="IPR045861">
    <property type="entry name" value="CorA_cytoplasmic_dom"/>
</dbReference>
<dbReference type="InterPro" id="IPR045863">
    <property type="entry name" value="CorA_TM1_TM2"/>
</dbReference>
<dbReference type="InterPro" id="IPR002523">
    <property type="entry name" value="MgTranspt_CorA/ZnTranspt_ZntB"/>
</dbReference>
<dbReference type="InterPro" id="IPR023714">
    <property type="entry name" value="Zn_transp_ZntB"/>
</dbReference>
<dbReference type="NCBIfam" id="NF007092">
    <property type="entry name" value="PRK09546.1"/>
    <property type="match status" value="1"/>
</dbReference>
<dbReference type="PANTHER" id="PTHR46494">
    <property type="entry name" value="CORA FAMILY METAL ION TRANSPORTER (EUROFUNG)"/>
    <property type="match status" value="1"/>
</dbReference>
<dbReference type="PANTHER" id="PTHR46494:SF3">
    <property type="entry name" value="ZINC TRANSPORT PROTEIN ZNTB"/>
    <property type="match status" value="1"/>
</dbReference>
<dbReference type="Pfam" id="PF01544">
    <property type="entry name" value="CorA"/>
    <property type="match status" value="1"/>
</dbReference>
<dbReference type="SUPFAM" id="SSF143865">
    <property type="entry name" value="CorA soluble domain-like"/>
    <property type="match status" value="1"/>
</dbReference>
<dbReference type="SUPFAM" id="SSF144083">
    <property type="entry name" value="Magnesium transport protein CorA, transmembrane region"/>
    <property type="match status" value="1"/>
</dbReference>
<reference key="1">
    <citation type="journal article" date="2008" name="Genome Res.">
        <title>Comparative genome analysis of Salmonella enteritidis PT4 and Salmonella gallinarum 287/91 provides insights into evolutionary and host adaptation pathways.</title>
        <authorList>
            <person name="Thomson N.R."/>
            <person name="Clayton D.J."/>
            <person name="Windhorst D."/>
            <person name="Vernikos G."/>
            <person name="Davidson S."/>
            <person name="Churcher C."/>
            <person name="Quail M.A."/>
            <person name="Stevens M."/>
            <person name="Jones M.A."/>
            <person name="Watson M."/>
            <person name="Barron A."/>
            <person name="Layton A."/>
            <person name="Pickard D."/>
            <person name="Kingsley R.A."/>
            <person name="Bignell A."/>
            <person name="Clark L."/>
            <person name="Harris B."/>
            <person name="Ormond D."/>
            <person name="Abdellah Z."/>
            <person name="Brooks K."/>
            <person name="Cherevach I."/>
            <person name="Chillingworth T."/>
            <person name="Woodward J."/>
            <person name="Norberczak H."/>
            <person name="Lord A."/>
            <person name="Arrowsmith C."/>
            <person name="Jagels K."/>
            <person name="Moule S."/>
            <person name="Mungall K."/>
            <person name="Saunders M."/>
            <person name="Whitehead S."/>
            <person name="Chabalgoity J.A."/>
            <person name="Maskell D."/>
            <person name="Humphreys T."/>
            <person name="Roberts M."/>
            <person name="Barrow P.A."/>
            <person name="Dougan G."/>
            <person name="Parkhill J."/>
        </authorList>
    </citation>
    <scope>NUCLEOTIDE SEQUENCE [LARGE SCALE GENOMIC DNA]</scope>
    <source>
        <strain>P125109</strain>
    </source>
</reference>
<comment type="function">
    <text evidence="1">Zinc transporter. Acts as a Zn(2+):proton symporter, which likely mediates zinc ion uptake.</text>
</comment>
<comment type="catalytic activity">
    <reaction evidence="1">
        <text>Zn(2+)(out) + H(+)(out) = Zn(2+)(in) + H(+)(in)</text>
        <dbReference type="Rhea" id="RHEA:71195"/>
        <dbReference type="ChEBI" id="CHEBI:15378"/>
        <dbReference type="ChEBI" id="CHEBI:29105"/>
    </reaction>
    <physiologicalReaction direction="left-to-right" evidence="1">
        <dbReference type="Rhea" id="RHEA:71196"/>
    </physiologicalReaction>
</comment>
<comment type="subcellular location">
    <subcellularLocation>
        <location evidence="1">Cell inner membrane</location>
        <topology evidence="1">Multi-pass membrane protein</topology>
    </subcellularLocation>
</comment>
<comment type="similarity">
    <text evidence="1">Belongs to the CorA metal ion transporter (MIT) (TC 1.A.35) family.</text>
</comment>
<sequence length="327" mass="36789">MEAIKGSDVNVPDAVFAWLLDGRGGVKPLEDNDVIDSQHPCWLHLNYTHPDSARWLASTPLLPNNVRDALAGESSRPRVSRMGEGTLITLRCINGSTDERPDQLVAMRLYMDERFIVSTRQRKVLALDDVVSDLQEGTGPVDCGSWLVDVCDALTDHASEFIEELHDKIIDLEDNLLDQQIPPRGFLALLRKQLIVMRRYMAPQRDVYARLASERLPWMSDDHRRRMQDIADRLGRGLDEIDACIARTGIMADEIAQVMQESLARRTYTMSLMAMVFLPSTFLTGLFGVNLGGIPGGGWRFGFSLFCILLVVLIGGVTLWLHRSKWL</sequence>
<accession>B5R4D6</accession>
<keyword id="KW-0997">Cell inner membrane</keyword>
<keyword id="KW-1003">Cell membrane</keyword>
<keyword id="KW-0406">Ion transport</keyword>
<keyword id="KW-0472">Membrane</keyword>
<keyword id="KW-0812">Transmembrane</keyword>
<keyword id="KW-1133">Transmembrane helix</keyword>
<keyword id="KW-0813">Transport</keyword>
<keyword id="KW-0862">Zinc</keyword>
<proteinExistence type="inferred from homology"/>
<protein>
    <recommendedName>
        <fullName evidence="1">Zinc transport protein ZntB</fullName>
    </recommendedName>
</protein>
<organism>
    <name type="scientific">Salmonella enteritidis PT4 (strain P125109)</name>
    <dbReference type="NCBI Taxonomy" id="550537"/>
    <lineage>
        <taxon>Bacteria</taxon>
        <taxon>Pseudomonadati</taxon>
        <taxon>Pseudomonadota</taxon>
        <taxon>Gammaproteobacteria</taxon>
        <taxon>Enterobacterales</taxon>
        <taxon>Enterobacteriaceae</taxon>
        <taxon>Salmonella</taxon>
    </lineage>
</organism>
<feature type="chain" id="PRO_1000189726" description="Zinc transport protein ZntB">
    <location>
        <begin position="1"/>
        <end position="327"/>
    </location>
</feature>
<feature type="topological domain" description="Cytoplasmic" evidence="1">
    <location>
        <begin position="1"/>
        <end position="273"/>
    </location>
</feature>
<feature type="transmembrane region" description="Helical" evidence="1">
    <location>
        <begin position="274"/>
        <end position="294"/>
    </location>
</feature>
<feature type="topological domain" description="Periplasmic" evidence="1">
    <location>
        <begin position="295"/>
        <end position="300"/>
    </location>
</feature>
<feature type="transmembrane region" description="Helical" evidence="1">
    <location>
        <begin position="301"/>
        <end position="321"/>
    </location>
</feature>
<feature type="topological domain" description="Cytoplasmic" evidence="1">
    <location>
        <begin position="322"/>
        <end position="327"/>
    </location>
</feature>